<dbReference type="EC" id="2.7.7.85" evidence="1"/>
<dbReference type="EMBL" id="AE000516">
    <property type="protein sequence ID" value="AAK48050.1"/>
    <property type="molecule type" value="Genomic_DNA"/>
</dbReference>
<dbReference type="PIR" id="C70804">
    <property type="entry name" value="C70804"/>
</dbReference>
<dbReference type="RefSeq" id="WP_003900111.1">
    <property type="nucleotide sequence ID" value="NZ_KK341227.1"/>
</dbReference>
<dbReference type="SMR" id="P9WNW4"/>
<dbReference type="KEGG" id="mtc:MT3692"/>
<dbReference type="PATRIC" id="fig|83331.31.peg.3975"/>
<dbReference type="HOGENOM" id="CLU_787128_0_0_11"/>
<dbReference type="Proteomes" id="UP000001020">
    <property type="component" value="Chromosome"/>
</dbReference>
<dbReference type="GO" id="GO:0004016">
    <property type="term" value="F:adenylate cyclase activity"/>
    <property type="evidence" value="ECO:0007669"/>
    <property type="project" value="TreeGrafter"/>
</dbReference>
<dbReference type="GO" id="GO:0005524">
    <property type="term" value="F:ATP binding"/>
    <property type="evidence" value="ECO:0007669"/>
    <property type="project" value="UniProtKB-UniRule"/>
</dbReference>
<dbReference type="GO" id="GO:0106408">
    <property type="term" value="F:diadenylate cyclase activity"/>
    <property type="evidence" value="ECO:0007669"/>
    <property type="project" value="UniProtKB-EC"/>
</dbReference>
<dbReference type="GO" id="GO:0003677">
    <property type="term" value="F:DNA binding"/>
    <property type="evidence" value="ECO:0007669"/>
    <property type="project" value="UniProtKB-UniRule"/>
</dbReference>
<dbReference type="GO" id="GO:0006281">
    <property type="term" value="P:DNA repair"/>
    <property type="evidence" value="ECO:0007669"/>
    <property type="project" value="UniProtKB-UniRule"/>
</dbReference>
<dbReference type="FunFam" id="1.10.150.20:FF:000016">
    <property type="entry name" value="DNA integrity scanning protein DisA"/>
    <property type="match status" value="1"/>
</dbReference>
<dbReference type="FunFam" id="1.20.1260.110:FF:000002">
    <property type="entry name" value="DNA integrity scanning protein DisA"/>
    <property type="match status" value="1"/>
</dbReference>
<dbReference type="FunFam" id="3.40.1700.10:FF:000001">
    <property type="entry name" value="DNA integrity scanning protein DisA"/>
    <property type="match status" value="1"/>
</dbReference>
<dbReference type="Gene3D" id="1.10.150.20">
    <property type="entry name" value="5' to 3' exonuclease, C-terminal subdomain"/>
    <property type="match status" value="1"/>
</dbReference>
<dbReference type="Gene3D" id="1.20.1260.110">
    <property type="entry name" value="DNA integrity scanning linker region"/>
    <property type="match status" value="1"/>
</dbReference>
<dbReference type="Gene3D" id="3.40.1700.10">
    <property type="entry name" value="DNA integrity scanning protein, DisA, N-terminal domain"/>
    <property type="match status" value="1"/>
</dbReference>
<dbReference type="HAMAP" id="MF_01438">
    <property type="entry name" value="DisA"/>
    <property type="match status" value="1"/>
</dbReference>
<dbReference type="InterPro" id="IPR050338">
    <property type="entry name" value="DisA"/>
</dbReference>
<dbReference type="InterPro" id="IPR038331">
    <property type="entry name" value="DisA_sf"/>
</dbReference>
<dbReference type="InterPro" id="IPR036888">
    <property type="entry name" value="DNA_integrity_DisA_N_sf"/>
</dbReference>
<dbReference type="InterPro" id="IPR018906">
    <property type="entry name" value="DNA_integrity_scan_DisA_link"/>
</dbReference>
<dbReference type="InterPro" id="IPR003390">
    <property type="entry name" value="DNA_integrity_scan_DisA_N"/>
</dbReference>
<dbReference type="InterPro" id="IPR023763">
    <property type="entry name" value="DNA_integrity_scanning_protein"/>
</dbReference>
<dbReference type="InterPro" id="IPR010994">
    <property type="entry name" value="RuvA_2-like"/>
</dbReference>
<dbReference type="NCBIfam" id="NF010009">
    <property type="entry name" value="PRK13482.1"/>
    <property type="match status" value="1"/>
</dbReference>
<dbReference type="PANTHER" id="PTHR34185">
    <property type="entry name" value="DIADENYLATE CYCLASE"/>
    <property type="match status" value="1"/>
</dbReference>
<dbReference type="PANTHER" id="PTHR34185:SF3">
    <property type="entry name" value="DNA INTEGRITY SCANNING PROTEIN DISA"/>
    <property type="match status" value="1"/>
</dbReference>
<dbReference type="Pfam" id="PF02457">
    <property type="entry name" value="DAC"/>
    <property type="match status" value="1"/>
</dbReference>
<dbReference type="Pfam" id="PF10635">
    <property type="entry name" value="DisA-linker"/>
    <property type="match status" value="1"/>
</dbReference>
<dbReference type="SUPFAM" id="SSF47781">
    <property type="entry name" value="RuvA domain 2-like"/>
    <property type="match status" value="1"/>
</dbReference>
<dbReference type="SUPFAM" id="SSF143597">
    <property type="entry name" value="YojJ-like"/>
    <property type="match status" value="1"/>
</dbReference>
<dbReference type="PROSITE" id="PS51794">
    <property type="entry name" value="DAC"/>
    <property type="match status" value="1"/>
</dbReference>
<protein>
    <recommendedName>
        <fullName evidence="1">DNA integrity scanning protein DisA</fullName>
    </recommendedName>
    <alternativeName>
        <fullName>Cyclic-di-AMP synthase</fullName>
        <shortName evidence="1">c-di-AMP synthase</shortName>
    </alternativeName>
    <alternativeName>
        <fullName evidence="1">Diadenylate cyclase</fullName>
        <ecNumber evidence="1">2.7.7.85</ecNumber>
    </alternativeName>
</protein>
<proteinExistence type="inferred from homology"/>
<name>DISA_MYCTO</name>
<gene>
    <name evidence="1" type="primary">disA</name>
    <name type="synonym">dacA</name>
    <name type="ordered locus">MT3692</name>
</gene>
<sequence length="358" mass="39031">MHAVTRPTLREAVARLAPGTGLRDGLERILRGRTGALIVLGHDENVEAICDGGFSLDVRYAATRLRELCKMDGAVVLSTDGSRIVRANVQLVPDPSIPTDESGTRHRSAERAAIQTGYPVISVSHSMNIVTVYVRGERHVLTDSATILSRANQAIATLERYKTRLDEVSRQLSRAEIEDFVTLRDVMTVVQRLELVRRIGLVIDYDVVELGTDGRQLRLQLDELLGGNDTARELIVRDYHANPEPPSTGQINATLDELDALSDGDLLDFTALAKVFGYPTTTEAQDSTLSPRGYRAMAGIPRLQFAHADLLVRAFGTLQGLLAASAGDLQSVDGIGAMWARHVREGLSQLAESTISDQ</sequence>
<keyword id="KW-0067">ATP-binding</keyword>
<keyword id="KW-0227">DNA damage</keyword>
<keyword id="KW-0234">DNA repair</keyword>
<keyword id="KW-0238">DNA-binding</keyword>
<keyword id="KW-0460">Magnesium</keyword>
<keyword id="KW-0464">Manganese</keyword>
<keyword id="KW-0547">Nucleotide-binding</keyword>
<keyword id="KW-0548">Nucleotidyltransferase</keyword>
<keyword id="KW-1185">Reference proteome</keyword>
<keyword id="KW-0808">Transferase</keyword>
<feature type="chain" id="PRO_0000427056" description="DNA integrity scanning protein DisA">
    <location>
        <begin position="1"/>
        <end position="358"/>
    </location>
</feature>
<feature type="domain" description="DAC" evidence="2">
    <location>
        <begin position="6"/>
        <end position="144"/>
    </location>
</feature>
<feature type="binding site" evidence="1">
    <location>
        <position position="73"/>
    </location>
    <ligand>
        <name>ATP</name>
        <dbReference type="ChEBI" id="CHEBI:30616"/>
    </ligand>
</feature>
<feature type="binding site" evidence="1">
    <location>
        <position position="91"/>
    </location>
    <ligand>
        <name>ATP</name>
        <dbReference type="ChEBI" id="CHEBI:30616"/>
    </ligand>
</feature>
<feature type="binding site" evidence="1">
    <location>
        <begin position="104"/>
        <end position="108"/>
    </location>
    <ligand>
        <name>ATP</name>
        <dbReference type="ChEBI" id="CHEBI:30616"/>
    </ligand>
</feature>
<organism>
    <name type="scientific">Mycobacterium tuberculosis (strain CDC 1551 / Oshkosh)</name>
    <dbReference type="NCBI Taxonomy" id="83331"/>
    <lineage>
        <taxon>Bacteria</taxon>
        <taxon>Bacillati</taxon>
        <taxon>Actinomycetota</taxon>
        <taxon>Actinomycetes</taxon>
        <taxon>Mycobacteriales</taxon>
        <taxon>Mycobacteriaceae</taxon>
        <taxon>Mycobacterium</taxon>
        <taxon>Mycobacterium tuberculosis complex</taxon>
    </lineage>
</organism>
<comment type="function">
    <text evidence="1">Participates in a DNA-damage check-point. DisA forms globular foci that rapidly scan along the chromosomes searching for lesions.</text>
</comment>
<comment type="function">
    <text evidence="1">Also has diadenylate cyclase activity, catalyzing the condensation of 2 ATP molecules into cyclic di-AMP (c-di-AMP). c-di-AMP likely acts as a signaling molecule that may couple DNA integrity with a cellular process.</text>
</comment>
<comment type="catalytic activity">
    <reaction evidence="1">
        <text>2 ATP = 3',3'-c-di-AMP + 2 diphosphate</text>
        <dbReference type="Rhea" id="RHEA:35655"/>
        <dbReference type="ChEBI" id="CHEBI:30616"/>
        <dbReference type="ChEBI" id="CHEBI:33019"/>
        <dbReference type="ChEBI" id="CHEBI:71500"/>
        <dbReference type="EC" id="2.7.7.85"/>
    </reaction>
</comment>
<comment type="cofactor">
    <cofactor evidence="1">
        <name>Mg(2+)</name>
        <dbReference type="ChEBI" id="CHEBI:18420"/>
    </cofactor>
</comment>
<comment type="subunit">
    <text evidence="1">Homooctamer.</text>
</comment>
<comment type="similarity">
    <text evidence="1">Belongs to the DisA family.</text>
</comment>
<accession>P9WNW4</accession>
<accession>F2GJT2</accession>
<accession>O53571</accession>
<accession>Q7D584</accession>
<reference key="1">
    <citation type="journal article" date="2002" name="J. Bacteriol.">
        <title>Whole-genome comparison of Mycobacterium tuberculosis clinical and laboratory strains.</title>
        <authorList>
            <person name="Fleischmann R.D."/>
            <person name="Alland D."/>
            <person name="Eisen J.A."/>
            <person name="Carpenter L."/>
            <person name="White O."/>
            <person name="Peterson J.D."/>
            <person name="DeBoy R.T."/>
            <person name="Dodson R.J."/>
            <person name="Gwinn M.L."/>
            <person name="Haft D.H."/>
            <person name="Hickey E.K."/>
            <person name="Kolonay J.F."/>
            <person name="Nelson W.C."/>
            <person name="Umayam L.A."/>
            <person name="Ermolaeva M.D."/>
            <person name="Salzberg S.L."/>
            <person name="Delcher A."/>
            <person name="Utterback T.R."/>
            <person name="Weidman J.F."/>
            <person name="Khouri H.M."/>
            <person name="Gill J."/>
            <person name="Mikula A."/>
            <person name="Bishai W."/>
            <person name="Jacobs W.R. Jr."/>
            <person name="Venter J.C."/>
            <person name="Fraser C.M."/>
        </authorList>
    </citation>
    <scope>NUCLEOTIDE SEQUENCE [LARGE SCALE GENOMIC DNA]</scope>
    <source>
        <strain>CDC 1551 / Oshkosh</strain>
    </source>
</reference>
<evidence type="ECO:0000255" key="1">
    <source>
        <dbReference type="HAMAP-Rule" id="MF_01438"/>
    </source>
</evidence>
<evidence type="ECO:0000255" key="2">
    <source>
        <dbReference type="PROSITE-ProRule" id="PRU01130"/>
    </source>
</evidence>